<feature type="chain" id="PRO_0000229970" description="Tetraacyldisaccharide 4'-kinase">
    <location>
        <begin position="1"/>
        <end position="336"/>
    </location>
</feature>
<feature type="binding site" evidence="1">
    <location>
        <begin position="60"/>
        <end position="67"/>
    </location>
    <ligand>
        <name>ATP</name>
        <dbReference type="ChEBI" id="CHEBI:30616"/>
    </ligand>
</feature>
<comment type="function">
    <text evidence="1">Transfers the gamma-phosphate of ATP to the 4'-position of a tetraacyldisaccharide 1-phosphate intermediate (termed DS-1-P) to form tetraacyldisaccharide 1,4'-bis-phosphate (lipid IVA).</text>
</comment>
<comment type="catalytic activity">
    <reaction evidence="1">
        <text>a lipid A disaccharide + ATP = a lipid IVA + ADP + H(+)</text>
        <dbReference type="Rhea" id="RHEA:67840"/>
        <dbReference type="ChEBI" id="CHEBI:15378"/>
        <dbReference type="ChEBI" id="CHEBI:30616"/>
        <dbReference type="ChEBI" id="CHEBI:176343"/>
        <dbReference type="ChEBI" id="CHEBI:176425"/>
        <dbReference type="ChEBI" id="CHEBI:456216"/>
        <dbReference type="EC" id="2.7.1.130"/>
    </reaction>
</comment>
<comment type="pathway">
    <text evidence="1">Glycolipid biosynthesis; lipid IV(A) biosynthesis; lipid IV(A) from (3R)-3-hydroxytetradecanoyl-[acyl-carrier-protein] and UDP-N-acetyl-alpha-D-glucosamine: step 6/6.</text>
</comment>
<comment type="similarity">
    <text evidence="1">Belongs to the LpxK family.</text>
</comment>
<protein>
    <recommendedName>
        <fullName evidence="1">Tetraacyldisaccharide 4'-kinase</fullName>
        <ecNumber evidence="1">2.7.1.130</ecNumber>
    </recommendedName>
    <alternativeName>
        <fullName evidence="1">Lipid A 4'-kinase</fullName>
    </alternativeName>
</protein>
<dbReference type="EC" id="2.7.1.130" evidence="1"/>
<dbReference type="EMBL" id="CP000094">
    <property type="protein sequence ID" value="ABA75912.1"/>
    <property type="molecule type" value="Genomic_DNA"/>
</dbReference>
<dbReference type="RefSeq" id="WP_011335449.1">
    <property type="nucleotide sequence ID" value="NC_007492.2"/>
</dbReference>
<dbReference type="SMR" id="Q3K8J2"/>
<dbReference type="KEGG" id="pfo:Pfl01_4175"/>
<dbReference type="eggNOG" id="COG1663">
    <property type="taxonomic scope" value="Bacteria"/>
</dbReference>
<dbReference type="HOGENOM" id="CLU_038816_2_0_6"/>
<dbReference type="UniPathway" id="UPA00359">
    <property type="reaction ID" value="UER00482"/>
</dbReference>
<dbReference type="Proteomes" id="UP000002704">
    <property type="component" value="Chromosome"/>
</dbReference>
<dbReference type="GO" id="GO:0005886">
    <property type="term" value="C:plasma membrane"/>
    <property type="evidence" value="ECO:0007669"/>
    <property type="project" value="TreeGrafter"/>
</dbReference>
<dbReference type="GO" id="GO:0005524">
    <property type="term" value="F:ATP binding"/>
    <property type="evidence" value="ECO:0007669"/>
    <property type="project" value="UniProtKB-UniRule"/>
</dbReference>
<dbReference type="GO" id="GO:0009029">
    <property type="term" value="F:tetraacyldisaccharide 4'-kinase activity"/>
    <property type="evidence" value="ECO:0007669"/>
    <property type="project" value="UniProtKB-UniRule"/>
</dbReference>
<dbReference type="GO" id="GO:0009245">
    <property type="term" value="P:lipid A biosynthetic process"/>
    <property type="evidence" value="ECO:0007669"/>
    <property type="project" value="UniProtKB-UniRule"/>
</dbReference>
<dbReference type="GO" id="GO:0009244">
    <property type="term" value="P:lipopolysaccharide core region biosynthetic process"/>
    <property type="evidence" value="ECO:0007669"/>
    <property type="project" value="TreeGrafter"/>
</dbReference>
<dbReference type="HAMAP" id="MF_00409">
    <property type="entry name" value="LpxK"/>
    <property type="match status" value="1"/>
</dbReference>
<dbReference type="InterPro" id="IPR003758">
    <property type="entry name" value="LpxK"/>
</dbReference>
<dbReference type="InterPro" id="IPR027417">
    <property type="entry name" value="P-loop_NTPase"/>
</dbReference>
<dbReference type="NCBIfam" id="TIGR00682">
    <property type="entry name" value="lpxK"/>
    <property type="match status" value="1"/>
</dbReference>
<dbReference type="PANTHER" id="PTHR42724">
    <property type="entry name" value="TETRAACYLDISACCHARIDE 4'-KINASE"/>
    <property type="match status" value="1"/>
</dbReference>
<dbReference type="PANTHER" id="PTHR42724:SF1">
    <property type="entry name" value="TETRAACYLDISACCHARIDE 4'-KINASE, MITOCHONDRIAL-RELATED"/>
    <property type="match status" value="1"/>
</dbReference>
<dbReference type="Pfam" id="PF02606">
    <property type="entry name" value="LpxK"/>
    <property type="match status" value="1"/>
</dbReference>
<dbReference type="SUPFAM" id="SSF52540">
    <property type="entry name" value="P-loop containing nucleoside triphosphate hydrolases"/>
    <property type="match status" value="1"/>
</dbReference>
<reference key="1">
    <citation type="journal article" date="2009" name="Genome Biol.">
        <title>Genomic and genetic analyses of diversity and plant interactions of Pseudomonas fluorescens.</title>
        <authorList>
            <person name="Silby M.W."/>
            <person name="Cerdeno-Tarraga A.M."/>
            <person name="Vernikos G.S."/>
            <person name="Giddens S.R."/>
            <person name="Jackson R.W."/>
            <person name="Preston G.M."/>
            <person name="Zhang X.-X."/>
            <person name="Moon C.D."/>
            <person name="Gehrig S.M."/>
            <person name="Godfrey S.A.C."/>
            <person name="Knight C.G."/>
            <person name="Malone J.G."/>
            <person name="Robinson Z."/>
            <person name="Spiers A.J."/>
            <person name="Harris S."/>
            <person name="Challis G.L."/>
            <person name="Yaxley A.M."/>
            <person name="Harris D."/>
            <person name="Seeger K."/>
            <person name="Murphy L."/>
            <person name="Rutter S."/>
            <person name="Squares R."/>
            <person name="Quail M.A."/>
            <person name="Saunders E."/>
            <person name="Mavromatis K."/>
            <person name="Brettin T.S."/>
            <person name="Bentley S.D."/>
            <person name="Hothersall J."/>
            <person name="Stephens E."/>
            <person name="Thomas C.M."/>
            <person name="Parkhill J."/>
            <person name="Levy S.B."/>
            <person name="Rainey P.B."/>
            <person name="Thomson N.R."/>
        </authorList>
    </citation>
    <scope>NUCLEOTIDE SEQUENCE [LARGE SCALE GENOMIC DNA]</scope>
    <source>
        <strain>Pf0-1</strain>
    </source>
</reference>
<organism>
    <name type="scientific">Pseudomonas fluorescens (strain Pf0-1)</name>
    <dbReference type="NCBI Taxonomy" id="205922"/>
    <lineage>
        <taxon>Bacteria</taxon>
        <taxon>Pseudomonadati</taxon>
        <taxon>Pseudomonadota</taxon>
        <taxon>Gammaproteobacteria</taxon>
        <taxon>Pseudomonadales</taxon>
        <taxon>Pseudomonadaceae</taxon>
        <taxon>Pseudomonas</taxon>
    </lineage>
</organism>
<gene>
    <name evidence="1" type="primary">lpxK</name>
    <name type="ordered locus">Pfl01_4175</name>
</gene>
<evidence type="ECO:0000255" key="1">
    <source>
        <dbReference type="HAMAP-Rule" id="MF_00409"/>
    </source>
</evidence>
<keyword id="KW-0067">ATP-binding</keyword>
<keyword id="KW-0418">Kinase</keyword>
<keyword id="KW-0441">Lipid A biosynthesis</keyword>
<keyword id="KW-0444">Lipid biosynthesis</keyword>
<keyword id="KW-0443">Lipid metabolism</keyword>
<keyword id="KW-0547">Nucleotide-binding</keyword>
<keyword id="KW-0808">Transferase</keyword>
<proteinExistence type="inferred from homology"/>
<accession>Q3K8J2</accession>
<name>LPXK_PSEPF</name>
<sequence>MAMSDRLLAAWYHGHPALTLLRPLEWLYRRVVAGKRQRFLDGEGEIYQSPVPVIVVGNITVGGTGKTPMILWLIEHCRRHGLRVGVVSRGYGAKPAQLPWRVQADQTADIAGDEPLLIVQRTGVPLMIDPDRSAAVRALLDSEPLDLILSDDGMQHYRLARDLELVLIDAARGLGNRRCLPAGPLREPAERLQSVDGVLFNGALEDRDGGFAFRLKPSALVNLRSGERRPLDHFPPGQAVHAVAGIGNPQRFFNTLEALDWRPVPHAFADHAEYSVQALSFTPSLPVVMTEKDAVKCRAFAADDWWYLTVDAVPSPAFVAWFDTQLMRLLPDRLLP</sequence>